<organism>
    <name type="scientific">Shewanella piezotolerans (strain WP3 / JCM 13877)</name>
    <dbReference type="NCBI Taxonomy" id="225849"/>
    <lineage>
        <taxon>Bacteria</taxon>
        <taxon>Pseudomonadati</taxon>
        <taxon>Pseudomonadota</taxon>
        <taxon>Gammaproteobacteria</taxon>
        <taxon>Alteromonadales</taxon>
        <taxon>Shewanellaceae</taxon>
        <taxon>Shewanella</taxon>
    </lineage>
</organism>
<evidence type="ECO:0000255" key="1">
    <source>
        <dbReference type="HAMAP-Rule" id="MF_00168"/>
    </source>
</evidence>
<sequence length="377" mass="42904">MKFELDTTQGRARRGRLVFERGTVETPAFMPVGTYGTVKGMTPEEVRETGADILLGNTFHLWLRPGEEIMRKHGDLHDFMNWQRPILTDSGGFQVFSLGDIRKITEEGVHFRSPINGEKIFLDPEKSMQIQDSLGSDVVMIFDECTPYPATEDEARKSMQMSLRWAQRSRDEFDRLENPNSLFGIIQGGVYEGLRDESLKGLVDIGFDGYAVGGLAVGEPKEDMHRILEHTCPQIPADKPRYLMGVGKPEDLVEGVRRGVDMFDCVMPTRNARNGHLFTSEGVVKIRNARHRDDTSTLDDKCDCYTCKNYSRAYLYHLDRCNEILGARLNTIHNLRYYQRLMEGLRGAIETGTLDDFVTEFYTSQGREVPEVPELTD</sequence>
<proteinExistence type="inferred from homology"/>
<comment type="function">
    <text evidence="1">Catalyzes the base-exchange of a guanine (G) residue with the queuine precursor 7-aminomethyl-7-deazaguanine (PreQ1) at position 34 (anticodon wobble position) in tRNAs with GU(N) anticodons (tRNA-Asp, -Asn, -His and -Tyr). Catalysis occurs through a double-displacement mechanism. The nucleophile active site attacks the C1' of nucleotide 34 to detach the guanine base from the RNA, forming a covalent enzyme-RNA intermediate. The proton acceptor active site deprotonates the incoming PreQ1, allowing a nucleophilic attack on the C1' of the ribose to form the product. After dissociation, two additional enzymatic reactions on the tRNA convert PreQ1 to queuine (Q), resulting in the hypermodified nucleoside queuosine (7-(((4,5-cis-dihydroxy-2-cyclopenten-1-yl)amino)methyl)-7-deazaguanosine).</text>
</comment>
<comment type="catalytic activity">
    <reaction evidence="1">
        <text>7-aminomethyl-7-carbaguanine + guanosine(34) in tRNA = 7-aminomethyl-7-carbaguanosine(34) in tRNA + guanine</text>
        <dbReference type="Rhea" id="RHEA:24104"/>
        <dbReference type="Rhea" id="RHEA-COMP:10341"/>
        <dbReference type="Rhea" id="RHEA-COMP:10342"/>
        <dbReference type="ChEBI" id="CHEBI:16235"/>
        <dbReference type="ChEBI" id="CHEBI:58703"/>
        <dbReference type="ChEBI" id="CHEBI:74269"/>
        <dbReference type="ChEBI" id="CHEBI:82833"/>
        <dbReference type="EC" id="2.4.2.29"/>
    </reaction>
</comment>
<comment type="cofactor">
    <cofactor evidence="1">
        <name>Zn(2+)</name>
        <dbReference type="ChEBI" id="CHEBI:29105"/>
    </cofactor>
    <text evidence="1">Binds 1 zinc ion per subunit.</text>
</comment>
<comment type="pathway">
    <text evidence="1">tRNA modification; tRNA-queuosine biosynthesis.</text>
</comment>
<comment type="subunit">
    <text evidence="1">Homodimer. Within each dimer, one monomer is responsible for RNA recognition and catalysis, while the other monomer binds to the replacement base PreQ1.</text>
</comment>
<comment type="similarity">
    <text evidence="1">Belongs to the queuine tRNA-ribosyltransferase family.</text>
</comment>
<name>TGT_SHEPW</name>
<accession>B8CLC5</accession>
<reference key="1">
    <citation type="journal article" date="2008" name="PLoS ONE">
        <title>Environmental adaptation: genomic analysis of the piezotolerant and psychrotolerant deep-sea iron reducing bacterium Shewanella piezotolerans WP3.</title>
        <authorList>
            <person name="Wang F."/>
            <person name="Wang J."/>
            <person name="Jian H."/>
            <person name="Zhang B."/>
            <person name="Li S."/>
            <person name="Wang F."/>
            <person name="Zeng X."/>
            <person name="Gao L."/>
            <person name="Bartlett D.H."/>
            <person name="Yu J."/>
            <person name="Hu S."/>
            <person name="Xiao X."/>
        </authorList>
    </citation>
    <scope>NUCLEOTIDE SEQUENCE [LARGE SCALE GENOMIC DNA]</scope>
    <source>
        <strain>WP3 / JCM 13877</strain>
    </source>
</reference>
<dbReference type="EC" id="2.4.2.29" evidence="1"/>
<dbReference type="EMBL" id="CP000472">
    <property type="protein sequence ID" value="ACJ28451.1"/>
    <property type="molecule type" value="Genomic_DNA"/>
</dbReference>
<dbReference type="RefSeq" id="WP_020911829.1">
    <property type="nucleotide sequence ID" value="NC_011566.1"/>
</dbReference>
<dbReference type="SMR" id="B8CLC5"/>
<dbReference type="STRING" id="225849.swp_1677"/>
<dbReference type="KEGG" id="swp:swp_1677"/>
<dbReference type="eggNOG" id="COG0343">
    <property type="taxonomic scope" value="Bacteria"/>
</dbReference>
<dbReference type="HOGENOM" id="CLU_022060_0_1_6"/>
<dbReference type="OrthoDB" id="9805417at2"/>
<dbReference type="UniPathway" id="UPA00392"/>
<dbReference type="Proteomes" id="UP000000753">
    <property type="component" value="Chromosome"/>
</dbReference>
<dbReference type="GO" id="GO:0005829">
    <property type="term" value="C:cytosol"/>
    <property type="evidence" value="ECO:0007669"/>
    <property type="project" value="TreeGrafter"/>
</dbReference>
<dbReference type="GO" id="GO:0046872">
    <property type="term" value="F:metal ion binding"/>
    <property type="evidence" value="ECO:0007669"/>
    <property type="project" value="UniProtKB-KW"/>
</dbReference>
<dbReference type="GO" id="GO:0008479">
    <property type="term" value="F:tRNA-guanosine(34) queuine transglycosylase activity"/>
    <property type="evidence" value="ECO:0007669"/>
    <property type="project" value="UniProtKB-UniRule"/>
</dbReference>
<dbReference type="GO" id="GO:0008616">
    <property type="term" value="P:queuosine biosynthetic process"/>
    <property type="evidence" value="ECO:0007669"/>
    <property type="project" value="UniProtKB-UniRule"/>
</dbReference>
<dbReference type="GO" id="GO:0002099">
    <property type="term" value="P:tRNA wobble guanine modification"/>
    <property type="evidence" value="ECO:0007669"/>
    <property type="project" value="TreeGrafter"/>
</dbReference>
<dbReference type="GO" id="GO:0101030">
    <property type="term" value="P:tRNA-guanine transglycosylation"/>
    <property type="evidence" value="ECO:0007669"/>
    <property type="project" value="InterPro"/>
</dbReference>
<dbReference type="FunFam" id="3.20.20.105:FF:000001">
    <property type="entry name" value="Queuine tRNA-ribosyltransferase"/>
    <property type="match status" value="1"/>
</dbReference>
<dbReference type="Gene3D" id="3.20.20.105">
    <property type="entry name" value="Queuine tRNA-ribosyltransferase-like"/>
    <property type="match status" value="1"/>
</dbReference>
<dbReference type="HAMAP" id="MF_00168">
    <property type="entry name" value="Q_tRNA_Tgt"/>
    <property type="match status" value="1"/>
</dbReference>
<dbReference type="InterPro" id="IPR050076">
    <property type="entry name" value="ArchSynthase1/Queuine_TRR"/>
</dbReference>
<dbReference type="InterPro" id="IPR004803">
    <property type="entry name" value="TGT"/>
</dbReference>
<dbReference type="InterPro" id="IPR036511">
    <property type="entry name" value="TGT-like_sf"/>
</dbReference>
<dbReference type="InterPro" id="IPR002616">
    <property type="entry name" value="tRNA_ribo_trans-like"/>
</dbReference>
<dbReference type="NCBIfam" id="TIGR00430">
    <property type="entry name" value="Q_tRNA_tgt"/>
    <property type="match status" value="1"/>
</dbReference>
<dbReference type="NCBIfam" id="TIGR00449">
    <property type="entry name" value="tgt_general"/>
    <property type="match status" value="1"/>
</dbReference>
<dbReference type="PANTHER" id="PTHR46499">
    <property type="entry name" value="QUEUINE TRNA-RIBOSYLTRANSFERASE"/>
    <property type="match status" value="1"/>
</dbReference>
<dbReference type="PANTHER" id="PTHR46499:SF1">
    <property type="entry name" value="QUEUINE TRNA-RIBOSYLTRANSFERASE"/>
    <property type="match status" value="1"/>
</dbReference>
<dbReference type="Pfam" id="PF01702">
    <property type="entry name" value="TGT"/>
    <property type="match status" value="1"/>
</dbReference>
<dbReference type="SUPFAM" id="SSF51713">
    <property type="entry name" value="tRNA-guanine transglycosylase"/>
    <property type="match status" value="1"/>
</dbReference>
<gene>
    <name evidence="1" type="primary">tgt</name>
    <name type="ordered locus">swp_1677</name>
</gene>
<protein>
    <recommendedName>
        <fullName evidence="1">Queuine tRNA-ribosyltransferase</fullName>
        <ecNumber evidence="1">2.4.2.29</ecNumber>
    </recommendedName>
    <alternativeName>
        <fullName evidence="1">Guanine insertion enzyme</fullName>
    </alternativeName>
    <alternativeName>
        <fullName evidence="1">tRNA-guanine transglycosylase</fullName>
    </alternativeName>
</protein>
<feature type="chain" id="PRO_1000198022" description="Queuine tRNA-ribosyltransferase">
    <location>
        <begin position="1"/>
        <end position="377"/>
    </location>
</feature>
<feature type="region of interest" description="RNA binding" evidence="1">
    <location>
        <begin position="245"/>
        <end position="251"/>
    </location>
</feature>
<feature type="region of interest" description="RNA binding; important for wobble base 34 recognition" evidence="1">
    <location>
        <begin position="269"/>
        <end position="273"/>
    </location>
</feature>
<feature type="active site" description="Proton acceptor" evidence="1">
    <location>
        <position position="89"/>
    </location>
</feature>
<feature type="active site" description="Nucleophile" evidence="1">
    <location>
        <position position="264"/>
    </location>
</feature>
<feature type="binding site" evidence="1">
    <location>
        <begin position="89"/>
        <end position="93"/>
    </location>
    <ligand>
        <name>substrate</name>
    </ligand>
</feature>
<feature type="binding site" evidence="1">
    <location>
        <position position="143"/>
    </location>
    <ligand>
        <name>substrate</name>
    </ligand>
</feature>
<feature type="binding site" evidence="1">
    <location>
        <position position="187"/>
    </location>
    <ligand>
        <name>substrate</name>
    </ligand>
</feature>
<feature type="binding site" evidence="1">
    <location>
        <position position="214"/>
    </location>
    <ligand>
        <name>substrate</name>
    </ligand>
</feature>
<feature type="binding site" evidence="1">
    <location>
        <position position="302"/>
    </location>
    <ligand>
        <name>Zn(2+)</name>
        <dbReference type="ChEBI" id="CHEBI:29105"/>
    </ligand>
</feature>
<feature type="binding site" evidence="1">
    <location>
        <position position="304"/>
    </location>
    <ligand>
        <name>Zn(2+)</name>
        <dbReference type="ChEBI" id="CHEBI:29105"/>
    </ligand>
</feature>
<feature type="binding site" evidence="1">
    <location>
        <position position="307"/>
    </location>
    <ligand>
        <name>Zn(2+)</name>
        <dbReference type="ChEBI" id="CHEBI:29105"/>
    </ligand>
</feature>
<feature type="binding site" evidence="1">
    <location>
        <position position="333"/>
    </location>
    <ligand>
        <name>Zn(2+)</name>
        <dbReference type="ChEBI" id="CHEBI:29105"/>
    </ligand>
</feature>
<keyword id="KW-0328">Glycosyltransferase</keyword>
<keyword id="KW-0479">Metal-binding</keyword>
<keyword id="KW-0671">Queuosine biosynthesis</keyword>
<keyword id="KW-0808">Transferase</keyword>
<keyword id="KW-0819">tRNA processing</keyword>
<keyword id="KW-0862">Zinc</keyword>